<reference key="1">
    <citation type="journal article" date="2008" name="Gene">
        <title>Expression analysis of the calcineurin B-like gene family in rice (Oryza sativa L.) under environmental stresses.</title>
        <authorList>
            <person name="Gu Z."/>
            <person name="Ma B."/>
            <person name="Jiang Y."/>
            <person name="Chen Z."/>
            <person name="Su X."/>
            <person name="Zhang H."/>
        </authorList>
    </citation>
    <scope>NUCLEOTIDE SEQUENCE [MRNA] (ISOFORM 1)</scope>
    <scope>TISSUE SPECIFICITY</scope>
    <scope>INDUCTION</scope>
    <scope>GENE FAMILY</scope>
    <source>
        <strain>cv. Nipponbare</strain>
        <tissue>Seedling</tissue>
    </source>
</reference>
<reference key="2">
    <citation type="journal article" date="2005" name="Nature">
        <title>The map-based sequence of the rice genome.</title>
        <authorList>
            <consortium name="International rice genome sequencing project (IRGSP)"/>
        </authorList>
    </citation>
    <scope>NUCLEOTIDE SEQUENCE [LARGE SCALE GENOMIC DNA]</scope>
    <source>
        <strain>cv. Nipponbare</strain>
    </source>
</reference>
<reference key="3">
    <citation type="journal article" date="2008" name="Nucleic Acids Res.">
        <title>The rice annotation project database (RAP-DB): 2008 update.</title>
        <authorList>
            <consortium name="The rice annotation project (RAP)"/>
        </authorList>
    </citation>
    <scope>GENOME REANNOTATION</scope>
    <source>
        <strain>cv. Nipponbare</strain>
    </source>
</reference>
<reference key="4">
    <citation type="journal article" date="2013" name="Rice">
        <title>Improvement of the Oryza sativa Nipponbare reference genome using next generation sequence and optical map data.</title>
        <authorList>
            <person name="Kawahara Y."/>
            <person name="de la Bastide M."/>
            <person name="Hamilton J.P."/>
            <person name="Kanamori H."/>
            <person name="McCombie W.R."/>
            <person name="Ouyang S."/>
            <person name="Schwartz D.C."/>
            <person name="Tanaka T."/>
            <person name="Wu J."/>
            <person name="Zhou S."/>
            <person name="Childs K.L."/>
            <person name="Davidson R.M."/>
            <person name="Lin H."/>
            <person name="Quesada-Ocampo L."/>
            <person name="Vaillancourt B."/>
            <person name="Sakai H."/>
            <person name="Lee S.S."/>
            <person name="Kim J."/>
            <person name="Numa H."/>
            <person name="Itoh T."/>
            <person name="Buell C.R."/>
            <person name="Matsumoto T."/>
        </authorList>
    </citation>
    <scope>GENOME REANNOTATION</scope>
    <source>
        <strain>cv. Nipponbare</strain>
    </source>
</reference>
<reference key="5">
    <citation type="journal article" date="2003" name="Science">
        <title>Collection, mapping, and annotation of over 28,000 cDNA clones from japonica rice.</title>
        <authorList>
            <consortium name="The rice full-length cDNA consortium"/>
        </authorList>
    </citation>
    <scope>NUCLEOTIDE SEQUENCE [LARGE SCALE MRNA] (ISOFORM 2)</scope>
    <source>
        <strain>cv. Nipponbare</strain>
    </source>
</reference>
<reference key="6">
    <citation type="journal article" date="2004" name="Plant Physiol.">
        <title>Calcium sensors and their interacting protein kinases: genomics of the Arabidopsis and rice CBL-CIPK signaling networks.</title>
        <authorList>
            <person name="Kolukisaoglu U."/>
            <person name="Weinl S."/>
            <person name="Blazevic D."/>
            <person name="Batistic O."/>
            <person name="Kudla J."/>
        </authorList>
    </citation>
    <scope>GENE FAMILY</scope>
    <scope>NOMENCLATURE</scope>
</reference>
<reference key="7">
    <citation type="journal article" date="2005" name="Plant Physiol.">
        <title>A gibberellin-regulated calcineurin B in rice localizes to the tonoplast and is implicated in vacuole function.</title>
        <authorList>
            <person name="Hwang Y.-S."/>
            <person name="Bethke P.C."/>
            <person name="Cheong Y.H."/>
            <person name="Chang H.-S."/>
            <person name="Zhu T."/>
            <person name="Jones R.L."/>
        </authorList>
    </citation>
    <scope>GENE FAMILY</scope>
</reference>
<evidence type="ECO:0000250" key="1"/>
<evidence type="ECO:0000255" key="2">
    <source>
        <dbReference type="PROSITE-ProRule" id="PRU00448"/>
    </source>
</evidence>
<evidence type="ECO:0000269" key="3">
    <source>
    </source>
</evidence>
<evidence type="ECO:0000303" key="4">
    <source>
    </source>
</evidence>
<evidence type="ECO:0000305" key="5"/>
<dbReference type="EMBL" id="DQ201203">
    <property type="protein sequence ID" value="ABA54184.1"/>
    <property type="molecule type" value="mRNA"/>
</dbReference>
<dbReference type="EMBL" id="AP008207">
    <property type="protein sequence ID" value="BAF05314.1"/>
    <property type="molecule type" value="Genomic_DNA"/>
</dbReference>
<dbReference type="EMBL" id="AP014957">
    <property type="protein sequence ID" value="BAS72848.1"/>
    <property type="molecule type" value="Genomic_DNA"/>
</dbReference>
<dbReference type="EMBL" id="AK111735">
    <property type="status" value="NOT_ANNOTATED_CDS"/>
    <property type="molecule type" value="mRNA"/>
</dbReference>
<dbReference type="RefSeq" id="XP_015622218.1">
    <property type="nucleotide sequence ID" value="XM_015766732.1"/>
</dbReference>
<dbReference type="SMR" id="Q3HRN8"/>
<dbReference type="FunCoup" id="Q3HRN8">
    <property type="interactions" value="709"/>
</dbReference>
<dbReference type="STRING" id="39947.Q3HRN8"/>
<dbReference type="PaxDb" id="39947-Q3HRN8"/>
<dbReference type="eggNOG" id="KOG0034">
    <property type="taxonomic scope" value="Eukaryota"/>
</dbReference>
<dbReference type="InParanoid" id="Q3HRN8"/>
<dbReference type="OMA" id="YANCRNY"/>
<dbReference type="OrthoDB" id="191686at2759"/>
<dbReference type="Proteomes" id="UP000000763">
    <property type="component" value="Chromosome 1"/>
</dbReference>
<dbReference type="Proteomes" id="UP000059680">
    <property type="component" value="Chromosome 1"/>
</dbReference>
<dbReference type="GO" id="GO:0005509">
    <property type="term" value="F:calcium ion binding"/>
    <property type="evidence" value="ECO:0007669"/>
    <property type="project" value="InterPro"/>
</dbReference>
<dbReference type="GO" id="GO:0019900">
    <property type="term" value="F:kinase binding"/>
    <property type="evidence" value="ECO:0007669"/>
    <property type="project" value="InterPro"/>
</dbReference>
<dbReference type="GO" id="GO:0019722">
    <property type="term" value="P:calcium-mediated signaling"/>
    <property type="evidence" value="ECO:0007669"/>
    <property type="project" value="InterPro"/>
</dbReference>
<dbReference type="CDD" id="cd00051">
    <property type="entry name" value="EFh"/>
    <property type="match status" value="1"/>
</dbReference>
<dbReference type="FunFam" id="1.10.238.10:FF:000073">
    <property type="entry name" value="calcineurin B-like protein 3"/>
    <property type="match status" value="1"/>
</dbReference>
<dbReference type="Gene3D" id="1.10.238.10">
    <property type="entry name" value="EF-hand"/>
    <property type="match status" value="1"/>
</dbReference>
<dbReference type="InterPro" id="IPR045198">
    <property type="entry name" value="CNBL1-10"/>
</dbReference>
<dbReference type="InterPro" id="IPR011992">
    <property type="entry name" value="EF-hand-dom_pair"/>
</dbReference>
<dbReference type="InterPro" id="IPR018247">
    <property type="entry name" value="EF_Hand_1_Ca_BS"/>
</dbReference>
<dbReference type="InterPro" id="IPR002048">
    <property type="entry name" value="EF_hand_dom"/>
</dbReference>
<dbReference type="PANTHER" id="PTHR23056">
    <property type="entry name" value="CALCINEURIN B"/>
    <property type="match status" value="1"/>
</dbReference>
<dbReference type="PANTHER" id="PTHR23056:SF26">
    <property type="entry name" value="CALCINEURIN B-LIKE PROTEIN 10"/>
    <property type="match status" value="1"/>
</dbReference>
<dbReference type="Pfam" id="PF13202">
    <property type="entry name" value="EF-hand_5"/>
    <property type="match status" value="1"/>
</dbReference>
<dbReference type="Pfam" id="PF13499">
    <property type="entry name" value="EF-hand_7"/>
    <property type="match status" value="1"/>
</dbReference>
<dbReference type="PRINTS" id="PR00450">
    <property type="entry name" value="RECOVERIN"/>
</dbReference>
<dbReference type="SMART" id="SM00054">
    <property type="entry name" value="EFh"/>
    <property type="match status" value="3"/>
</dbReference>
<dbReference type="SUPFAM" id="SSF47473">
    <property type="entry name" value="EF-hand"/>
    <property type="match status" value="1"/>
</dbReference>
<dbReference type="PROSITE" id="PS00018">
    <property type="entry name" value="EF_HAND_1"/>
    <property type="match status" value="1"/>
</dbReference>
<dbReference type="PROSITE" id="PS50222">
    <property type="entry name" value="EF_HAND_2"/>
    <property type="match status" value="3"/>
</dbReference>
<sequence length="290" mass="32892">MESGYGFRFSDDDVESASSLTVGERLCAAFLPFVAIAEAVFFALTDCLADLLPPSAAASRHRRSAASSYLAAVARKWNHQQRGRVGIGCTSLTLRQLARLADESRCFSVNEVEALFELYKKISCSIIDDGLIHKEELQLALFKTPSGQNLFLDRVFDLFDEKKNGVIEFDEFIHALSVFHPLAPLEDKINFAFRLYDLRQTGFIEREEVMQMVIAILSESDMKLSEELLEAIIDKTFEDADADRDGKINQQEWKEFVLRHPNLLKNMTLPYLRDITTVFPSFVFNTAVED</sequence>
<comment type="function">
    <text evidence="1">Acts as a calcium sensor. CBL proteins interact with CIPK serine-threonine protein kinases. Binding of a CBL protein to the regulatory NAF domain of a CIPK protein lead to the activation of the kinase in a calcium-dependent manner (By similarity).</text>
</comment>
<comment type="subunit">
    <text evidence="1">Homodimer.</text>
</comment>
<comment type="alternative products">
    <event type="alternative splicing"/>
    <isoform>
        <id>Q3HRN8-1</id>
        <name>1</name>
        <sequence type="displayed"/>
    </isoform>
    <isoform>
        <id>Q3HRN8-2</id>
        <name>2</name>
        <sequence type="described" ref="VSP_034006 VSP_034007"/>
    </isoform>
</comment>
<comment type="tissue specificity">
    <text evidence="3">Expressed in shoots and culms.</text>
</comment>
<comment type="induction">
    <text evidence="3">By abscisic acid (ABA).</text>
</comment>
<comment type="similarity">
    <text evidence="5">Belongs to the calcineurin regulatory subunit family.</text>
</comment>
<proteinExistence type="evidence at transcript level"/>
<protein>
    <recommendedName>
        <fullName>Calcineurin B-like protein 9</fullName>
    </recommendedName>
</protein>
<feature type="chain" id="PRO_0000337772" description="Calcineurin B-like protein 9">
    <location>
        <begin position="1"/>
        <end position="290"/>
    </location>
</feature>
<feature type="domain" description="EF-hand 1" evidence="5">
    <location>
        <begin position="111"/>
        <end position="146"/>
    </location>
</feature>
<feature type="domain" description="EF-hand 2" evidence="2">
    <location>
        <begin position="147"/>
        <end position="182"/>
    </location>
</feature>
<feature type="domain" description="EF-hand 3" evidence="2">
    <location>
        <begin position="184"/>
        <end position="219"/>
    </location>
</feature>
<feature type="domain" description="EF-hand 4" evidence="2">
    <location>
        <begin position="228"/>
        <end position="263"/>
    </location>
</feature>
<feature type="binding site" evidence="2">
    <location>
        <position position="241"/>
    </location>
    <ligand>
        <name>Ca(2+)</name>
        <dbReference type="ChEBI" id="CHEBI:29108"/>
    </ligand>
</feature>
<feature type="binding site" evidence="2">
    <location>
        <position position="243"/>
    </location>
    <ligand>
        <name>Ca(2+)</name>
        <dbReference type="ChEBI" id="CHEBI:29108"/>
    </ligand>
</feature>
<feature type="binding site" evidence="2">
    <location>
        <position position="245"/>
    </location>
    <ligand>
        <name>Ca(2+)</name>
        <dbReference type="ChEBI" id="CHEBI:29108"/>
    </ligand>
</feature>
<feature type="binding site" evidence="2">
    <location>
        <position position="247"/>
    </location>
    <ligand>
        <name>Ca(2+)</name>
        <dbReference type="ChEBI" id="CHEBI:29108"/>
    </ligand>
</feature>
<feature type="binding site" evidence="2">
    <location>
        <position position="252"/>
    </location>
    <ligand>
        <name>Ca(2+)</name>
        <dbReference type="ChEBI" id="CHEBI:29108"/>
    </ligand>
</feature>
<feature type="site" description="Involved in dimerization" evidence="1">
    <location>
        <position position="220"/>
    </location>
</feature>
<feature type="splice variant" id="VSP_034006" description="In isoform 2." evidence="4">
    <original>FAFRLYDLRQTGFIEREEVMQMVIAILS</original>
    <variation>CKYTSFRHYLLKFMYRGIFTIRPPFGLF</variation>
    <location>
        <begin position="191"/>
        <end position="218"/>
    </location>
</feature>
<feature type="splice variant" id="VSP_034007" description="In isoform 2." evidence="4">
    <location>
        <begin position="219"/>
        <end position="290"/>
    </location>
</feature>
<feature type="sequence conflict" description="In Ref. 1; ABA54184." evidence="5" ref="1">
    <original>KKI</original>
    <variation>EKT</variation>
    <location>
        <begin position="120"/>
        <end position="122"/>
    </location>
</feature>
<feature type="sequence conflict" description="In Ref. 1; ABA54184." evidence="5" ref="1">
    <original>I</original>
    <variation>T</variation>
    <location>
        <position position="132"/>
    </location>
</feature>
<feature type="sequence conflict" description="In Ref. 1; ABA54184." evidence="5" ref="1">
    <original>LQL</original>
    <variation>PQP</variation>
    <location>
        <begin position="137"/>
        <end position="139"/>
    </location>
</feature>
<feature type="sequence conflict" description="In Ref. 1; ABA54184." evidence="5" ref="1">
    <original>K</original>
    <variation>R</variation>
    <location>
        <position position="143"/>
    </location>
</feature>
<feature type="sequence conflict" description="In Ref. 1; ABA54184." evidence="5" ref="1">
    <original>Q</original>
    <variation>R</variation>
    <location>
        <position position="148"/>
    </location>
</feature>
<feature type="sequence conflict" description="In Ref. 1; ABA54184." evidence="5" ref="1">
    <original>R</original>
    <variation>W</variation>
    <location>
        <position position="154"/>
    </location>
</feature>
<feature type="sequence conflict" description="In Ref. 5; AK111735." evidence="5" ref="5">
    <original>V</original>
    <variation>I</variation>
    <location>
        <position position="166"/>
    </location>
</feature>
<gene>
    <name type="primary">CBL9</name>
    <name type="ordered locus">Os01g0579600</name>
    <name type="ordered locus">LOC_Os01g39770</name>
</gene>
<organism>
    <name type="scientific">Oryza sativa subsp. japonica</name>
    <name type="common">Rice</name>
    <dbReference type="NCBI Taxonomy" id="39947"/>
    <lineage>
        <taxon>Eukaryota</taxon>
        <taxon>Viridiplantae</taxon>
        <taxon>Streptophyta</taxon>
        <taxon>Embryophyta</taxon>
        <taxon>Tracheophyta</taxon>
        <taxon>Spermatophyta</taxon>
        <taxon>Magnoliopsida</taxon>
        <taxon>Liliopsida</taxon>
        <taxon>Poales</taxon>
        <taxon>Poaceae</taxon>
        <taxon>BOP clade</taxon>
        <taxon>Oryzoideae</taxon>
        <taxon>Oryzeae</taxon>
        <taxon>Oryzinae</taxon>
        <taxon>Oryza</taxon>
        <taxon>Oryza sativa</taxon>
    </lineage>
</organism>
<keyword id="KW-0025">Alternative splicing</keyword>
<keyword id="KW-0106">Calcium</keyword>
<keyword id="KW-0479">Metal-binding</keyword>
<keyword id="KW-1185">Reference proteome</keyword>
<keyword id="KW-0677">Repeat</keyword>
<name>CNBL9_ORYSJ</name>
<accession>Q3HRN8</accession>
<accession>Q0JLR4</accession>